<organism evidence="8">
    <name type="scientific">Rattus norvegicus</name>
    <name type="common">Rat</name>
    <dbReference type="NCBI Taxonomy" id="10116"/>
    <lineage>
        <taxon>Eukaryota</taxon>
        <taxon>Metazoa</taxon>
        <taxon>Chordata</taxon>
        <taxon>Craniata</taxon>
        <taxon>Vertebrata</taxon>
        <taxon>Euteleostomi</taxon>
        <taxon>Mammalia</taxon>
        <taxon>Eutheria</taxon>
        <taxon>Euarchontoglires</taxon>
        <taxon>Glires</taxon>
        <taxon>Rodentia</taxon>
        <taxon>Myomorpha</taxon>
        <taxon>Muroidea</taxon>
        <taxon>Muridae</taxon>
        <taxon>Murinae</taxon>
        <taxon>Rattus</taxon>
    </lineage>
</organism>
<gene>
    <name evidence="9" type="primary">Mnx1</name>
    <name evidence="9" type="synonym">Hlxb9</name>
</gene>
<dbReference type="EMBL" id="CH474057">
    <property type="protein sequence ID" value="EDL86427.1"/>
    <property type="molecule type" value="Genomic_DNA"/>
</dbReference>
<dbReference type="RefSeq" id="NP_001258203.1">
    <property type="nucleotide sequence ID" value="NM_001271274.1"/>
</dbReference>
<dbReference type="SMR" id="M0R6D8"/>
<dbReference type="FunCoup" id="M0R6D8">
    <property type="interactions" value="497"/>
</dbReference>
<dbReference type="STRING" id="10116.ENSRNOP00000064986"/>
<dbReference type="GlyGen" id="M0R6D8">
    <property type="glycosylation" value="1 site"/>
</dbReference>
<dbReference type="PhosphoSitePlus" id="M0R6D8"/>
<dbReference type="PaxDb" id="10116-ENSRNOP00000064986"/>
<dbReference type="Ensembl" id="ENSRNOT00000072287.2">
    <property type="protein sequence ID" value="ENSRNOP00000064986.2"/>
    <property type="gene ID" value="ENSRNOG00000046959.2"/>
</dbReference>
<dbReference type="GeneID" id="682076"/>
<dbReference type="KEGG" id="rno:682076"/>
<dbReference type="AGR" id="RGD:1588091"/>
<dbReference type="CTD" id="3110"/>
<dbReference type="RGD" id="1588091">
    <property type="gene designation" value="Mnx1"/>
</dbReference>
<dbReference type="VEuPathDB" id="HostDB:ENSRNOG00000046959"/>
<dbReference type="eggNOG" id="KOG0489">
    <property type="taxonomic scope" value="Eukaryota"/>
</dbReference>
<dbReference type="GeneTree" id="ENSGT00940000160059"/>
<dbReference type="HOGENOM" id="CLU_049543_4_0_1"/>
<dbReference type="InParanoid" id="M0R6D8"/>
<dbReference type="OMA" id="YHAKTDS"/>
<dbReference type="OrthoDB" id="6159439at2759"/>
<dbReference type="PRO" id="PR:M0R6D8"/>
<dbReference type="Proteomes" id="UP000002494">
    <property type="component" value="Chromosome 4"/>
</dbReference>
<dbReference type="Proteomes" id="UP000234681">
    <property type="component" value="Chromosome 4"/>
</dbReference>
<dbReference type="Bgee" id="ENSRNOG00000046959">
    <property type="expression patterns" value="Expressed in jejunum and 4 other cell types or tissues"/>
</dbReference>
<dbReference type="GO" id="GO:0000785">
    <property type="term" value="C:chromatin"/>
    <property type="evidence" value="ECO:0000266"/>
    <property type="project" value="RGD"/>
</dbReference>
<dbReference type="GO" id="GO:0005829">
    <property type="term" value="C:cytosol"/>
    <property type="evidence" value="ECO:0007669"/>
    <property type="project" value="Ensembl"/>
</dbReference>
<dbReference type="GO" id="GO:0005730">
    <property type="term" value="C:nucleolus"/>
    <property type="evidence" value="ECO:0007669"/>
    <property type="project" value="Ensembl"/>
</dbReference>
<dbReference type="GO" id="GO:0005654">
    <property type="term" value="C:nucleoplasm"/>
    <property type="evidence" value="ECO:0007669"/>
    <property type="project" value="Ensembl"/>
</dbReference>
<dbReference type="GO" id="GO:0005634">
    <property type="term" value="C:nucleus"/>
    <property type="evidence" value="ECO:0000266"/>
    <property type="project" value="RGD"/>
</dbReference>
<dbReference type="GO" id="GO:0001227">
    <property type="term" value="F:DNA-binding transcription repressor activity, RNA polymerase II-specific"/>
    <property type="evidence" value="ECO:0000314"/>
    <property type="project" value="UniProtKB"/>
</dbReference>
<dbReference type="GO" id="GO:1990837">
    <property type="term" value="F:sequence-specific double-stranded DNA binding"/>
    <property type="evidence" value="ECO:0000314"/>
    <property type="project" value="UniProtKB"/>
</dbReference>
<dbReference type="GO" id="GO:0048667">
    <property type="term" value="P:cell morphogenesis involved in neuron differentiation"/>
    <property type="evidence" value="ECO:0000266"/>
    <property type="project" value="RGD"/>
</dbReference>
<dbReference type="GO" id="GO:0007417">
    <property type="term" value="P:central nervous system development"/>
    <property type="evidence" value="ECO:0000318"/>
    <property type="project" value="GO_Central"/>
</dbReference>
<dbReference type="GO" id="GO:0021953">
    <property type="term" value="P:central nervous system neuron differentiation"/>
    <property type="evidence" value="ECO:0000266"/>
    <property type="project" value="RGD"/>
</dbReference>
<dbReference type="GO" id="GO:0060539">
    <property type="term" value="P:diaphragm development"/>
    <property type="evidence" value="ECO:0000266"/>
    <property type="project" value="RGD"/>
</dbReference>
<dbReference type="GO" id="GO:0021904">
    <property type="term" value="P:dorsal/ventral neural tube patterning"/>
    <property type="evidence" value="ECO:0000266"/>
    <property type="project" value="RGD"/>
</dbReference>
<dbReference type="GO" id="GO:0031018">
    <property type="term" value="P:endocrine pancreas development"/>
    <property type="evidence" value="ECO:0000266"/>
    <property type="project" value="RGD"/>
</dbReference>
<dbReference type="GO" id="GO:0008045">
    <property type="term" value="P:motor neuron axon guidance"/>
    <property type="evidence" value="ECO:0000266"/>
    <property type="project" value="RGD"/>
</dbReference>
<dbReference type="GO" id="GO:0000122">
    <property type="term" value="P:negative regulation of transcription by RNA polymerase II"/>
    <property type="evidence" value="ECO:0000314"/>
    <property type="project" value="UniProtKB"/>
</dbReference>
<dbReference type="GO" id="GO:0021675">
    <property type="term" value="P:nerve development"/>
    <property type="evidence" value="ECO:0000266"/>
    <property type="project" value="RGD"/>
</dbReference>
<dbReference type="GO" id="GO:0030182">
    <property type="term" value="P:neuron differentiation"/>
    <property type="evidence" value="ECO:0000266"/>
    <property type="project" value="RGD"/>
</dbReference>
<dbReference type="GO" id="GO:0001764">
    <property type="term" value="P:neuron migration"/>
    <property type="evidence" value="ECO:0000266"/>
    <property type="project" value="RGD"/>
</dbReference>
<dbReference type="GO" id="GO:0048812">
    <property type="term" value="P:neuron projection morphogenesis"/>
    <property type="evidence" value="ECO:0000266"/>
    <property type="project" value="RGD"/>
</dbReference>
<dbReference type="GO" id="GO:0031016">
    <property type="term" value="P:pancreas development"/>
    <property type="evidence" value="ECO:0000266"/>
    <property type="project" value="RGD"/>
</dbReference>
<dbReference type="GO" id="GO:0009791">
    <property type="term" value="P:post-embryonic development"/>
    <property type="evidence" value="ECO:0000266"/>
    <property type="project" value="RGD"/>
</dbReference>
<dbReference type="GO" id="GO:0060541">
    <property type="term" value="P:respiratory system development"/>
    <property type="evidence" value="ECO:0000266"/>
    <property type="project" value="RGD"/>
</dbReference>
<dbReference type="GO" id="GO:0021520">
    <property type="term" value="P:spinal cord motor neuron cell fate specification"/>
    <property type="evidence" value="ECO:0000266"/>
    <property type="project" value="RGD"/>
</dbReference>
<dbReference type="CDD" id="cd00086">
    <property type="entry name" value="homeodomain"/>
    <property type="match status" value="1"/>
</dbReference>
<dbReference type="FunFam" id="1.10.10.60:FF:000243">
    <property type="entry name" value="Motor neuron and pancreas homeobox 1"/>
    <property type="match status" value="1"/>
</dbReference>
<dbReference type="Gene3D" id="1.10.10.60">
    <property type="entry name" value="Homeodomain-like"/>
    <property type="match status" value="1"/>
</dbReference>
<dbReference type="InterPro" id="IPR001356">
    <property type="entry name" value="HD"/>
</dbReference>
<dbReference type="InterPro" id="IPR020479">
    <property type="entry name" value="HD_metazoa"/>
</dbReference>
<dbReference type="InterPro" id="IPR017970">
    <property type="entry name" value="Homeobox_CS"/>
</dbReference>
<dbReference type="InterPro" id="IPR009057">
    <property type="entry name" value="Homeodomain-like_sf"/>
</dbReference>
<dbReference type="InterPro" id="IPR042768">
    <property type="entry name" value="MNX1/Ceh-12"/>
</dbReference>
<dbReference type="PANTHER" id="PTHR24335">
    <property type="entry name" value="MOTOR NEURON AND PANCREAS HOMEOBOX PROTEIN"/>
    <property type="match status" value="1"/>
</dbReference>
<dbReference type="PANTHER" id="PTHR24335:SF3">
    <property type="entry name" value="MOTOR NEURON AND PANCREAS HOMEOBOX PROTEIN 1"/>
    <property type="match status" value="1"/>
</dbReference>
<dbReference type="Pfam" id="PF00046">
    <property type="entry name" value="Homeodomain"/>
    <property type="match status" value="1"/>
</dbReference>
<dbReference type="PRINTS" id="PR00024">
    <property type="entry name" value="HOMEOBOX"/>
</dbReference>
<dbReference type="SMART" id="SM00389">
    <property type="entry name" value="HOX"/>
    <property type="match status" value="1"/>
</dbReference>
<dbReference type="SUPFAM" id="SSF46689">
    <property type="entry name" value="Homeodomain-like"/>
    <property type="match status" value="1"/>
</dbReference>
<dbReference type="PROSITE" id="PS00027">
    <property type="entry name" value="HOMEOBOX_1"/>
    <property type="match status" value="1"/>
</dbReference>
<dbReference type="PROSITE" id="PS50071">
    <property type="entry name" value="HOMEOBOX_2"/>
    <property type="match status" value="1"/>
</dbReference>
<accession>M0R6D8</accession>
<proteinExistence type="inferred from homology"/>
<name>MNX1_RAT</name>
<evidence type="ECO:0000250" key="1">
    <source>
        <dbReference type="UniProtKB" id="P50219"/>
    </source>
</evidence>
<evidence type="ECO:0000250" key="2">
    <source>
        <dbReference type="UniProtKB" id="Q9QZW9"/>
    </source>
</evidence>
<evidence type="ECO:0000255" key="3">
    <source>
        <dbReference type="PROSITE-ProRule" id="PRU00108"/>
    </source>
</evidence>
<evidence type="ECO:0000256" key="4">
    <source>
        <dbReference type="SAM" id="MobiDB-lite"/>
    </source>
</evidence>
<evidence type="ECO:0000269" key="5">
    <source>
    </source>
</evidence>
<evidence type="ECO:0000303" key="6">
    <source>
    </source>
</evidence>
<evidence type="ECO:0000305" key="7"/>
<evidence type="ECO:0000312" key="8">
    <source>
        <dbReference type="Proteomes" id="UP000002494"/>
    </source>
</evidence>
<evidence type="ECO:0000312" key="9">
    <source>
        <dbReference type="RGD" id="1588091"/>
    </source>
</evidence>
<reference evidence="8" key="1">
    <citation type="journal article" date="2004" name="Nature">
        <title>Genome sequence of the Brown Norway rat yields insights into mammalian evolution.</title>
        <authorList>
            <person name="Gibbs R.A."/>
            <person name="Weinstock G.M."/>
            <person name="Metzker M.L."/>
            <person name="Muzny D.M."/>
            <person name="Sodergren E.J."/>
            <person name="Scherer S."/>
            <person name="Scott G."/>
            <person name="Steffen D."/>
            <person name="Worley K.C."/>
            <person name="Burch P.E."/>
            <person name="Okwuonu G."/>
            <person name="Hines S."/>
            <person name="Lewis L."/>
            <person name="Deramo C."/>
            <person name="Delgado O."/>
            <person name="Dugan-Rocha S."/>
            <person name="Miner G."/>
            <person name="Morgan M."/>
            <person name="Hawes A."/>
            <person name="Gill R."/>
            <person name="Holt R.A."/>
            <person name="Adams M.D."/>
            <person name="Amanatides P.G."/>
            <person name="Baden-Tillson H."/>
            <person name="Barnstead M."/>
            <person name="Chin S."/>
            <person name="Evans C.A."/>
            <person name="Ferriera S."/>
            <person name="Fosler C."/>
            <person name="Glodek A."/>
            <person name="Gu Z."/>
            <person name="Jennings D."/>
            <person name="Kraft C.L."/>
            <person name="Nguyen T."/>
            <person name="Pfannkoch C.M."/>
            <person name="Sitter C."/>
            <person name="Sutton G.G."/>
            <person name="Venter J.C."/>
            <person name="Woodage T."/>
            <person name="Smith D."/>
            <person name="Lee H.-M."/>
            <person name="Gustafson E."/>
            <person name="Cahill P."/>
            <person name="Kana A."/>
            <person name="Doucette-Stamm L."/>
            <person name="Weinstock K."/>
            <person name="Fechtel K."/>
            <person name="Weiss R.B."/>
            <person name="Dunn D.M."/>
            <person name="Green E.D."/>
            <person name="Blakesley R.W."/>
            <person name="Bouffard G.G."/>
            <person name="De Jong P.J."/>
            <person name="Osoegawa K."/>
            <person name="Zhu B."/>
            <person name="Marra M."/>
            <person name="Schein J."/>
            <person name="Bosdet I."/>
            <person name="Fjell C."/>
            <person name="Jones S."/>
            <person name="Krzywinski M."/>
            <person name="Mathewson C."/>
            <person name="Siddiqui A."/>
            <person name="Wye N."/>
            <person name="McPherson J."/>
            <person name="Zhao S."/>
            <person name="Fraser C.M."/>
            <person name="Shetty J."/>
            <person name="Shatsman S."/>
            <person name="Geer K."/>
            <person name="Chen Y."/>
            <person name="Abramzon S."/>
            <person name="Nierman W.C."/>
            <person name="Havlak P.H."/>
            <person name="Chen R."/>
            <person name="Durbin K.J."/>
            <person name="Egan A."/>
            <person name="Ren Y."/>
            <person name="Song X.-Z."/>
            <person name="Li B."/>
            <person name="Liu Y."/>
            <person name="Qin X."/>
            <person name="Cawley S."/>
            <person name="Cooney A.J."/>
            <person name="D'Souza L.M."/>
            <person name="Martin K."/>
            <person name="Wu J.Q."/>
            <person name="Gonzalez-Garay M.L."/>
            <person name="Jackson A.R."/>
            <person name="Kalafus K.J."/>
            <person name="McLeod M.P."/>
            <person name="Milosavljevic A."/>
            <person name="Virk D."/>
            <person name="Volkov A."/>
            <person name="Wheeler D.A."/>
            <person name="Zhang Z."/>
            <person name="Bailey J.A."/>
            <person name="Eichler E.E."/>
            <person name="Tuzun E."/>
            <person name="Birney E."/>
            <person name="Mongin E."/>
            <person name="Ureta-Vidal A."/>
            <person name="Woodwark C."/>
            <person name="Zdobnov E."/>
            <person name="Bork P."/>
            <person name="Suyama M."/>
            <person name="Torrents D."/>
            <person name="Alexandersson M."/>
            <person name="Trask B.J."/>
            <person name="Young J.M."/>
            <person name="Huang H."/>
            <person name="Wang H."/>
            <person name="Xing H."/>
            <person name="Daniels S."/>
            <person name="Gietzen D."/>
            <person name="Schmidt J."/>
            <person name="Stevens K."/>
            <person name="Vitt U."/>
            <person name="Wingrove J."/>
            <person name="Camara F."/>
            <person name="Mar Alba M."/>
            <person name="Abril J.F."/>
            <person name="Guigo R."/>
            <person name="Smit A."/>
            <person name="Dubchak I."/>
            <person name="Rubin E.M."/>
            <person name="Couronne O."/>
            <person name="Poliakov A."/>
            <person name="Huebner N."/>
            <person name="Ganten D."/>
            <person name="Goesele C."/>
            <person name="Hummel O."/>
            <person name="Kreitler T."/>
            <person name="Lee Y.-A."/>
            <person name="Monti J."/>
            <person name="Schulz H."/>
            <person name="Zimdahl H."/>
            <person name="Himmelbauer H."/>
            <person name="Lehrach H."/>
            <person name="Jacob H.J."/>
            <person name="Bromberg S."/>
            <person name="Gullings-Handley J."/>
            <person name="Jensen-Seaman M.I."/>
            <person name="Kwitek A.E."/>
            <person name="Lazar J."/>
            <person name="Pasko D."/>
            <person name="Tonellato P.J."/>
            <person name="Twigger S."/>
            <person name="Ponting C.P."/>
            <person name="Duarte J.M."/>
            <person name="Rice S."/>
            <person name="Goodstadt L."/>
            <person name="Beatson S.A."/>
            <person name="Emes R.D."/>
            <person name="Winter E.E."/>
            <person name="Webber C."/>
            <person name="Brandt P."/>
            <person name="Nyakatura G."/>
            <person name="Adetobi M."/>
            <person name="Chiaromonte F."/>
            <person name="Elnitski L."/>
            <person name="Eswara P."/>
            <person name="Hardison R.C."/>
            <person name="Hou M."/>
            <person name="Kolbe D."/>
            <person name="Makova K."/>
            <person name="Miller W."/>
            <person name="Nekrutenko A."/>
            <person name="Riemer C."/>
            <person name="Schwartz S."/>
            <person name="Taylor J."/>
            <person name="Yang S."/>
            <person name="Zhang Y."/>
            <person name="Lindpaintner K."/>
            <person name="Andrews T.D."/>
            <person name="Caccamo M."/>
            <person name="Clamp M."/>
            <person name="Clarke L."/>
            <person name="Curwen V."/>
            <person name="Durbin R.M."/>
            <person name="Eyras E."/>
            <person name="Searle S.M."/>
            <person name="Cooper G.M."/>
            <person name="Batzoglou S."/>
            <person name="Brudno M."/>
            <person name="Sidow A."/>
            <person name="Stone E.A."/>
            <person name="Payseur B.A."/>
            <person name="Bourque G."/>
            <person name="Lopez-Otin C."/>
            <person name="Puente X.S."/>
            <person name="Chakrabarti K."/>
            <person name="Chatterji S."/>
            <person name="Dewey C."/>
            <person name="Pachter L."/>
            <person name="Bray N."/>
            <person name="Yap V.B."/>
            <person name="Caspi A."/>
            <person name="Tesler G."/>
            <person name="Pevzner P.A."/>
            <person name="Haussler D."/>
            <person name="Roskin K.M."/>
            <person name="Baertsch R."/>
            <person name="Clawson H."/>
            <person name="Furey T.S."/>
            <person name="Hinrichs A.S."/>
            <person name="Karolchik D."/>
            <person name="Kent W.J."/>
            <person name="Rosenbloom K.R."/>
            <person name="Trumbower H."/>
            <person name="Weirauch M."/>
            <person name="Cooper D.N."/>
            <person name="Stenson P.D."/>
            <person name="Ma B."/>
            <person name="Brent M."/>
            <person name="Arumugam M."/>
            <person name="Shteynberg D."/>
            <person name="Copley R.R."/>
            <person name="Taylor M.S."/>
            <person name="Riethman H."/>
            <person name="Mudunuri U."/>
            <person name="Peterson J."/>
            <person name="Guyer M."/>
            <person name="Felsenfeld A."/>
            <person name="Old S."/>
            <person name="Mockrin S."/>
            <person name="Collins F.S."/>
        </authorList>
    </citation>
    <scope>NUCLEOTIDE SEQUENCE [LARGE SCALE GENOMIC DNA]</scope>
    <source>
        <strain evidence="8">Brown Norway</strain>
    </source>
</reference>
<reference key="2">
    <citation type="journal article" date="2004" name="Genome Res.">
        <title>The status, quality, and expansion of the NIH full-length cDNA project: the Mammalian Gene Collection (MGC).</title>
        <authorList>
            <consortium name="The MGC Project Team"/>
        </authorList>
    </citation>
    <scope>NUCLEOTIDE SEQUENCE [LARGE SCALE MRNA]</scope>
</reference>
<reference evidence="7" key="3">
    <citation type="journal article" date="2008" name="Dev. Cell">
        <title>A regulatory network to segregate the identity of neuronal subtypes.</title>
        <authorList>
            <person name="Lee S."/>
            <person name="Lee B."/>
            <person name="Joshi K."/>
            <person name="Pfaff S.L."/>
            <person name="Lee J.W."/>
            <person name="Lee S.K."/>
        </authorList>
    </citation>
    <scope>FUNCTION</scope>
</reference>
<feature type="chain" id="PRO_0000456825" description="Motor neuron and pancreas homeobox 1">
    <location>
        <begin position="1"/>
        <end position="403"/>
    </location>
</feature>
<feature type="DNA-binding region" description="Homeobox" evidence="3">
    <location>
        <begin position="241"/>
        <end position="300"/>
    </location>
</feature>
<feature type="region of interest" description="Disordered" evidence="4">
    <location>
        <begin position="32"/>
        <end position="81"/>
    </location>
</feature>
<feature type="region of interest" description="Disordered" evidence="4">
    <location>
        <begin position="299"/>
        <end position="403"/>
    </location>
</feature>
<feature type="compositionally biased region" description="Gly residues" evidence="4">
    <location>
        <begin position="41"/>
        <end position="52"/>
    </location>
</feature>
<feature type="compositionally biased region" description="Low complexity" evidence="4">
    <location>
        <begin position="53"/>
        <end position="64"/>
    </location>
</feature>
<feature type="compositionally biased region" description="Basic and acidic residues" evidence="4">
    <location>
        <begin position="302"/>
        <end position="314"/>
    </location>
</feature>
<feature type="compositionally biased region" description="Basic and acidic residues" evidence="4">
    <location>
        <begin position="343"/>
        <end position="354"/>
    </location>
</feature>
<feature type="compositionally biased region" description="Acidic residues" evidence="4">
    <location>
        <begin position="355"/>
        <end position="365"/>
    </location>
</feature>
<feature type="compositionally biased region" description="Pro residues" evidence="4">
    <location>
        <begin position="390"/>
        <end position="403"/>
    </location>
</feature>
<feature type="modified residue" description="N-acetylmethionine" evidence="1">
    <location>
        <position position="1"/>
    </location>
</feature>
<feature type="modified residue" description="Phosphoserine" evidence="1">
    <location>
        <position position="78"/>
    </location>
</feature>
<feature type="modified residue" description="Phosphoserine" evidence="1">
    <location>
        <position position="80"/>
    </location>
</feature>
<sequence>MEKSKNFRIDALLAVDPPRAASTQSAPLALVTSLAATPSGPGRGGSGGGGTSSGASRSCSPASSEATAAPGDRLRAESPSPPRLLTAHCALLPKPGFLGAGGGGGAAGGPGTPHHHAHPGAAAAAAAAAAAAAAGGLALGLHPGGAQGGAGLPAQAALYGHPVYSYSAAAAAAALAGQHPALSYSYPQVQGAHPAHPADPIKLGAGTFQLDQWLRASTAGMILPKMPDFSSQAQSNLLGKCRRPRTAFTSQQLLELEHQFKLNKYLSRPKRFEVATSLMLTETQVKIWFQNRRMKWKRSKKAKEQAAQEAEKQKGSGGGAGKGGTEEKTEEELLGPPVSGDKASGRRLRDLRDSDPDEDEDDEEDHFPYSNGVGAHAASSDCSSEDDSPPPRPGGPGHQPLPQ</sequence>
<keyword id="KW-0007">Acetylation</keyword>
<keyword id="KW-0217">Developmental protein</keyword>
<keyword id="KW-0238">DNA-binding</keyword>
<keyword id="KW-0371">Homeobox</keyword>
<keyword id="KW-0539">Nucleus</keyword>
<keyword id="KW-0597">Phosphoprotein</keyword>
<keyword id="KW-1185">Reference proteome</keyword>
<keyword id="KW-0804">Transcription</keyword>
<keyword id="KW-0805">Transcription regulation</keyword>
<comment type="function">
    <text evidence="2 5">Transcription factor (PubMed:18539116). Recognizes and binds to the regulatory elements of target genes, such as visual system homeobox CHX10, negatively modulating transcription (By similarity). Plays a role in establishing motor neuron identity, in concert with LIM domain transcription factor LMO4 (By similarity). Involved in negatively modulating transcription of interneuron genes in motor neurons, acting, at least in part, by blocking regulatory sequence interactions of the ISL1-LHX3 complex (By similarity). Involved in pancreas development and function; may play a role in pancreatic cell fate specification (By similarity).</text>
</comment>
<comment type="subcellular location">
    <subcellularLocation>
        <location evidence="2">Nucleus</location>
    </subcellularLocation>
</comment>
<protein>
    <recommendedName>
        <fullName evidence="9">Motor neuron and pancreas homeobox 1</fullName>
    </recommendedName>
    <alternativeName>
        <fullName evidence="6">Homeobox protein HB9</fullName>
    </alternativeName>
</protein>